<sequence length="252" mass="28060">MLTVQSIPAFNDNYIWLIHNSHNHCVVVDPGDATPVLKVLEEQSLTLDAILITHHHHDHIGGISELKRHYPNLNVVGPASEPIPGISQSVEDGDQVELFGERFMVLGVPGHTLGHVAYVGDGKLFCGDTLFSVGCGRLFEGTPAQMFQSLKKLAALPDETEIYCAHEYTSSNLAFALVAEQDNPHLQRYREDVSRMRAQGISTIPSTLRQEKLVNPFLRCEQPSIKKSVADKAFDDSDLETFAALRRWKDNF</sequence>
<organism>
    <name type="scientific">Photobacterium profundum (strain SS9)</name>
    <dbReference type="NCBI Taxonomy" id="298386"/>
    <lineage>
        <taxon>Bacteria</taxon>
        <taxon>Pseudomonadati</taxon>
        <taxon>Pseudomonadota</taxon>
        <taxon>Gammaproteobacteria</taxon>
        <taxon>Vibrionales</taxon>
        <taxon>Vibrionaceae</taxon>
        <taxon>Photobacterium</taxon>
    </lineage>
</organism>
<evidence type="ECO:0000255" key="1">
    <source>
        <dbReference type="HAMAP-Rule" id="MF_01374"/>
    </source>
</evidence>
<evidence type="ECO:0000305" key="2"/>
<protein>
    <recommendedName>
        <fullName evidence="1">Hydroxyacylglutathione hydrolase</fullName>
        <ecNumber evidence="1">3.1.2.6</ecNumber>
    </recommendedName>
    <alternativeName>
        <fullName evidence="1">Glyoxalase II</fullName>
        <shortName evidence="1">Glx II</shortName>
    </alternativeName>
</protein>
<keyword id="KW-0378">Hydrolase</keyword>
<keyword id="KW-0479">Metal-binding</keyword>
<keyword id="KW-1185">Reference proteome</keyword>
<keyword id="KW-0862">Zinc</keyword>
<reference key="1">
    <citation type="journal article" date="2005" name="Science">
        <title>Life at depth: Photobacterium profundum genome sequence and expression analysis.</title>
        <authorList>
            <person name="Vezzi A."/>
            <person name="Campanaro S."/>
            <person name="D'Angelo M."/>
            <person name="Simonato F."/>
            <person name="Vitulo N."/>
            <person name="Lauro F.M."/>
            <person name="Cestaro A."/>
            <person name="Malacrida G."/>
            <person name="Simionati B."/>
            <person name="Cannata N."/>
            <person name="Romualdi C."/>
            <person name="Bartlett D.H."/>
            <person name="Valle G."/>
        </authorList>
    </citation>
    <scope>NUCLEOTIDE SEQUENCE [LARGE SCALE GENOMIC DNA]</scope>
    <source>
        <strain>ATCC BAA-1253 / SS9</strain>
    </source>
</reference>
<accession>Q6LN63</accession>
<dbReference type="EC" id="3.1.2.6" evidence="1"/>
<dbReference type="EMBL" id="CR378672">
    <property type="protein sequence ID" value="CAG21263.1"/>
    <property type="status" value="ALT_INIT"/>
    <property type="molecule type" value="Genomic_DNA"/>
</dbReference>
<dbReference type="RefSeq" id="WP_041394487.1">
    <property type="nucleotide sequence ID" value="NC_006370.1"/>
</dbReference>
<dbReference type="SMR" id="Q6LN63"/>
<dbReference type="STRING" id="298386.PBPRA2920"/>
<dbReference type="KEGG" id="ppr:PBPRA2920"/>
<dbReference type="eggNOG" id="COG0491">
    <property type="taxonomic scope" value="Bacteria"/>
</dbReference>
<dbReference type="HOGENOM" id="CLU_030571_4_1_6"/>
<dbReference type="UniPathway" id="UPA00619">
    <property type="reaction ID" value="UER00676"/>
</dbReference>
<dbReference type="Proteomes" id="UP000000593">
    <property type="component" value="Chromosome 1"/>
</dbReference>
<dbReference type="GO" id="GO:0004416">
    <property type="term" value="F:hydroxyacylglutathione hydrolase activity"/>
    <property type="evidence" value="ECO:0007669"/>
    <property type="project" value="UniProtKB-UniRule"/>
</dbReference>
<dbReference type="GO" id="GO:0046872">
    <property type="term" value="F:metal ion binding"/>
    <property type="evidence" value="ECO:0007669"/>
    <property type="project" value="UniProtKB-KW"/>
</dbReference>
<dbReference type="GO" id="GO:0019243">
    <property type="term" value="P:methylglyoxal catabolic process to D-lactate via S-lactoyl-glutathione"/>
    <property type="evidence" value="ECO:0007669"/>
    <property type="project" value="InterPro"/>
</dbReference>
<dbReference type="CDD" id="cd07723">
    <property type="entry name" value="hydroxyacylglutathione_hydrolase_MBL-fold"/>
    <property type="match status" value="1"/>
</dbReference>
<dbReference type="Gene3D" id="3.60.15.10">
    <property type="entry name" value="Ribonuclease Z/Hydroxyacylglutathione hydrolase-like"/>
    <property type="match status" value="1"/>
</dbReference>
<dbReference type="HAMAP" id="MF_01374">
    <property type="entry name" value="Glyoxalase_2"/>
    <property type="match status" value="1"/>
</dbReference>
<dbReference type="InterPro" id="IPR035680">
    <property type="entry name" value="Clx_II_MBL"/>
</dbReference>
<dbReference type="InterPro" id="IPR050110">
    <property type="entry name" value="Glyoxalase_II_hydrolase"/>
</dbReference>
<dbReference type="InterPro" id="IPR032282">
    <property type="entry name" value="HAGH_C"/>
</dbReference>
<dbReference type="InterPro" id="IPR017782">
    <property type="entry name" value="Hydroxyacylglutathione_Hdrlase"/>
</dbReference>
<dbReference type="InterPro" id="IPR001279">
    <property type="entry name" value="Metallo-B-lactamas"/>
</dbReference>
<dbReference type="InterPro" id="IPR036866">
    <property type="entry name" value="RibonucZ/Hydroxyglut_hydro"/>
</dbReference>
<dbReference type="NCBIfam" id="TIGR03413">
    <property type="entry name" value="GSH_gloB"/>
    <property type="match status" value="1"/>
</dbReference>
<dbReference type="PANTHER" id="PTHR43705">
    <property type="entry name" value="HYDROXYACYLGLUTATHIONE HYDROLASE"/>
    <property type="match status" value="1"/>
</dbReference>
<dbReference type="PANTHER" id="PTHR43705:SF1">
    <property type="entry name" value="HYDROXYACYLGLUTATHIONE HYDROLASE GLOB"/>
    <property type="match status" value="1"/>
</dbReference>
<dbReference type="Pfam" id="PF16123">
    <property type="entry name" value="HAGH_C"/>
    <property type="match status" value="1"/>
</dbReference>
<dbReference type="Pfam" id="PF00753">
    <property type="entry name" value="Lactamase_B"/>
    <property type="match status" value="1"/>
</dbReference>
<dbReference type="PIRSF" id="PIRSF005457">
    <property type="entry name" value="Glx"/>
    <property type="match status" value="1"/>
</dbReference>
<dbReference type="SMART" id="SM00849">
    <property type="entry name" value="Lactamase_B"/>
    <property type="match status" value="1"/>
</dbReference>
<dbReference type="SUPFAM" id="SSF56281">
    <property type="entry name" value="Metallo-hydrolase/oxidoreductase"/>
    <property type="match status" value="1"/>
</dbReference>
<proteinExistence type="inferred from homology"/>
<feature type="chain" id="PRO_0000309672" description="Hydroxyacylglutathione hydrolase">
    <location>
        <begin position="1"/>
        <end position="252"/>
    </location>
</feature>
<feature type="binding site" evidence="1">
    <location>
        <position position="54"/>
    </location>
    <ligand>
        <name>Zn(2+)</name>
        <dbReference type="ChEBI" id="CHEBI:29105"/>
        <label>1</label>
    </ligand>
</feature>
<feature type="binding site" evidence="1">
    <location>
        <position position="56"/>
    </location>
    <ligand>
        <name>Zn(2+)</name>
        <dbReference type="ChEBI" id="CHEBI:29105"/>
        <label>1</label>
    </ligand>
</feature>
<feature type="binding site" evidence="1">
    <location>
        <position position="58"/>
    </location>
    <ligand>
        <name>Zn(2+)</name>
        <dbReference type="ChEBI" id="CHEBI:29105"/>
        <label>2</label>
    </ligand>
</feature>
<feature type="binding site" evidence="1">
    <location>
        <position position="59"/>
    </location>
    <ligand>
        <name>Zn(2+)</name>
        <dbReference type="ChEBI" id="CHEBI:29105"/>
        <label>2</label>
    </ligand>
</feature>
<feature type="binding site" evidence="1">
    <location>
        <position position="111"/>
    </location>
    <ligand>
        <name>Zn(2+)</name>
        <dbReference type="ChEBI" id="CHEBI:29105"/>
        <label>1</label>
    </ligand>
</feature>
<feature type="binding site" evidence="1">
    <location>
        <position position="128"/>
    </location>
    <ligand>
        <name>Zn(2+)</name>
        <dbReference type="ChEBI" id="CHEBI:29105"/>
        <label>1</label>
    </ligand>
</feature>
<feature type="binding site" evidence="1">
    <location>
        <position position="128"/>
    </location>
    <ligand>
        <name>Zn(2+)</name>
        <dbReference type="ChEBI" id="CHEBI:29105"/>
        <label>2</label>
    </ligand>
</feature>
<feature type="binding site" evidence="1">
    <location>
        <position position="166"/>
    </location>
    <ligand>
        <name>Zn(2+)</name>
        <dbReference type="ChEBI" id="CHEBI:29105"/>
        <label>2</label>
    </ligand>
</feature>
<gene>
    <name evidence="1" type="primary">gloB</name>
    <name type="ordered locus">PBPRA2920</name>
</gene>
<name>GLO2_PHOPR</name>
<comment type="function">
    <text evidence="1">Thiolesterase that catalyzes the hydrolysis of S-D-lactoyl-glutathione to form glutathione and D-lactic acid.</text>
</comment>
<comment type="catalytic activity">
    <reaction evidence="1">
        <text>an S-(2-hydroxyacyl)glutathione + H2O = a 2-hydroxy carboxylate + glutathione + H(+)</text>
        <dbReference type="Rhea" id="RHEA:21864"/>
        <dbReference type="ChEBI" id="CHEBI:15377"/>
        <dbReference type="ChEBI" id="CHEBI:15378"/>
        <dbReference type="ChEBI" id="CHEBI:57925"/>
        <dbReference type="ChEBI" id="CHEBI:58896"/>
        <dbReference type="ChEBI" id="CHEBI:71261"/>
        <dbReference type="EC" id="3.1.2.6"/>
    </reaction>
</comment>
<comment type="cofactor">
    <cofactor evidence="1">
        <name>Zn(2+)</name>
        <dbReference type="ChEBI" id="CHEBI:29105"/>
    </cofactor>
    <text evidence="1">Binds 2 Zn(2+) ions per subunit.</text>
</comment>
<comment type="pathway">
    <text evidence="1">Secondary metabolite metabolism; methylglyoxal degradation; (R)-lactate from methylglyoxal: step 2/2.</text>
</comment>
<comment type="subunit">
    <text evidence="1">Monomer.</text>
</comment>
<comment type="similarity">
    <text evidence="1">Belongs to the metallo-beta-lactamase superfamily. Glyoxalase II family.</text>
</comment>
<comment type="sequence caution" evidence="2">
    <conflict type="erroneous initiation">
        <sequence resource="EMBL-CDS" id="CAG21263"/>
    </conflict>
</comment>